<accession>P28644</accession>
<protein>
    <recommendedName>
        <fullName>28 kDa ribonucleoprotein, chloroplastic</fullName>
        <shortName>28RNP</shortName>
    </recommendedName>
</protein>
<organism>
    <name type="scientific">Spinacia oleracea</name>
    <name type="common">Spinach</name>
    <dbReference type="NCBI Taxonomy" id="3562"/>
    <lineage>
        <taxon>Eukaryota</taxon>
        <taxon>Viridiplantae</taxon>
        <taxon>Streptophyta</taxon>
        <taxon>Embryophyta</taxon>
        <taxon>Tracheophyta</taxon>
        <taxon>Spermatophyta</taxon>
        <taxon>Magnoliopsida</taxon>
        <taxon>eudicotyledons</taxon>
        <taxon>Gunneridae</taxon>
        <taxon>Pentapetalae</taxon>
        <taxon>Caryophyllales</taxon>
        <taxon>Chenopodiaceae</taxon>
        <taxon>Chenopodioideae</taxon>
        <taxon>Anserineae</taxon>
        <taxon>Spinacia</taxon>
    </lineage>
</organism>
<comment type="function">
    <text>Probably involved in the 3'-end processing of chloroplast mRNA's.</text>
</comment>
<comment type="subcellular location">
    <subcellularLocation>
        <location>Plastid</location>
        <location>Chloroplast</location>
    </subcellularLocation>
</comment>
<keyword id="KW-0150">Chloroplast</keyword>
<keyword id="KW-0903">Direct protein sequencing</keyword>
<keyword id="KW-0507">mRNA processing</keyword>
<keyword id="KW-0934">Plastid</keyword>
<keyword id="KW-1185">Reference proteome</keyword>
<keyword id="KW-0677">Repeat</keyword>
<keyword id="KW-0687">Ribonucleoprotein</keyword>
<keyword id="KW-0694">RNA-binding</keyword>
<dbReference type="EMBL" id="X57955">
    <property type="protein sequence ID" value="CAA41023.1"/>
    <property type="molecule type" value="mRNA"/>
</dbReference>
<dbReference type="PIR" id="S15348">
    <property type="entry name" value="S15348"/>
</dbReference>
<dbReference type="SMR" id="P28644"/>
<dbReference type="Proteomes" id="UP001155700">
    <property type="component" value="Unplaced"/>
</dbReference>
<dbReference type="GO" id="GO:0009535">
    <property type="term" value="C:chloroplast thylakoid membrane"/>
    <property type="evidence" value="ECO:0007669"/>
    <property type="project" value="TreeGrafter"/>
</dbReference>
<dbReference type="GO" id="GO:1990904">
    <property type="term" value="C:ribonucleoprotein complex"/>
    <property type="evidence" value="ECO:0007669"/>
    <property type="project" value="UniProtKB-KW"/>
</dbReference>
<dbReference type="GO" id="GO:0003729">
    <property type="term" value="F:mRNA binding"/>
    <property type="evidence" value="ECO:0000318"/>
    <property type="project" value="GO_Central"/>
</dbReference>
<dbReference type="GO" id="GO:1901259">
    <property type="term" value="P:chloroplast rRNA processing"/>
    <property type="evidence" value="ECO:0000318"/>
    <property type="project" value="GO_Central"/>
</dbReference>
<dbReference type="GO" id="GO:0006397">
    <property type="term" value="P:mRNA processing"/>
    <property type="evidence" value="ECO:0007669"/>
    <property type="project" value="UniProtKB-KW"/>
</dbReference>
<dbReference type="CDD" id="cd21608">
    <property type="entry name" value="RRM2_NsCP33_like"/>
    <property type="match status" value="1"/>
</dbReference>
<dbReference type="FunFam" id="3.30.70.330:FF:000268">
    <property type="entry name" value="31 kDa ribonucleoprotein, chloroplastic"/>
    <property type="match status" value="1"/>
</dbReference>
<dbReference type="Gene3D" id="3.30.70.330">
    <property type="match status" value="2"/>
</dbReference>
<dbReference type="InterPro" id="IPR050502">
    <property type="entry name" value="Euk_RNA-bind_prot"/>
</dbReference>
<dbReference type="InterPro" id="IPR012677">
    <property type="entry name" value="Nucleotide-bd_a/b_plait_sf"/>
</dbReference>
<dbReference type="InterPro" id="IPR035979">
    <property type="entry name" value="RBD_domain_sf"/>
</dbReference>
<dbReference type="InterPro" id="IPR048289">
    <property type="entry name" value="RRM2_NsCP33-like"/>
</dbReference>
<dbReference type="InterPro" id="IPR000504">
    <property type="entry name" value="RRM_dom"/>
</dbReference>
<dbReference type="PANTHER" id="PTHR48025:SF3">
    <property type="entry name" value="31 KDA RIBONUCLEOPROTEIN, CHLOROPLASTIC-RELATED"/>
    <property type="match status" value="1"/>
</dbReference>
<dbReference type="PANTHER" id="PTHR48025">
    <property type="entry name" value="OS02G0815200 PROTEIN"/>
    <property type="match status" value="1"/>
</dbReference>
<dbReference type="Pfam" id="PF00076">
    <property type="entry name" value="RRM_1"/>
    <property type="match status" value="2"/>
</dbReference>
<dbReference type="SMART" id="SM00360">
    <property type="entry name" value="RRM"/>
    <property type="match status" value="2"/>
</dbReference>
<dbReference type="SUPFAM" id="SSF54928">
    <property type="entry name" value="RNA-binding domain, RBD"/>
    <property type="match status" value="2"/>
</dbReference>
<dbReference type="PROSITE" id="PS50102">
    <property type="entry name" value="RRM"/>
    <property type="match status" value="2"/>
</dbReference>
<name>ROC1_SPIOL</name>
<sequence>CVAQTSEWEQEGSTNAVLEGESDPEGAVSWGSETQVSDEGGVEGGQGFSEPPEEAKLFVGNLPYDVDSEKLAGIFDAAGVVEIAEVIYNRETDRSRGFGFVTMSTVEEAEKAVELLNGYDMDGRQLTVNKAAPRGSPERAPRGDFEPSCRVYVGNLPWDVDTSRLEQLFSEHGKVVSARVVSDRETGRSRGFGFVTMSSESEVNDAIAALDGQTLDGRAVRVNVAEERPRRAF</sequence>
<feature type="chain" id="PRO_0000081843" description="28 kDa ribonucleoprotein, chloroplastic">
    <location>
        <begin position="1"/>
        <end position="233"/>
    </location>
</feature>
<feature type="domain" description="RRM 1" evidence="1">
    <location>
        <begin position="55"/>
        <end position="133"/>
    </location>
</feature>
<feature type="domain" description="RRM 2" evidence="1">
    <location>
        <begin position="149"/>
        <end position="227"/>
    </location>
</feature>
<feature type="region of interest" description="Disordered" evidence="2">
    <location>
        <begin position="1"/>
        <end position="52"/>
    </location>
</feature>
<feature type="compositionally biased region" description="Polar residues" evidence="2">
    <location>
        <begin position="1"/>
        <end position="16"/>
    </location>
</feature>
<proteinExistence type="evidence at protein level"/>
<evidence type="ECO:0000255" key="1">
    <source>
        <dbReference type="PROSITE-ProRule" id="PRU00176"/>
    </source>
</evidence>
<evidence type="ECO:0000256" key="2">
    <source>
        <dbReference type="SAM" id="MobiDB-lite"/>
    </source>
</evidence>
<reference key="1">
    <citation type="journal article" date="1991" name="EMBO J.">
        <title>Chloroplast mRNA 3' end processing requires a nuclear-encoded RNA-binding protein.</title>
        <authorList>
            <person name="Schuster G."/>
            <person name="Gruissem W."/>
        </authorList>
    </citation>
    <scope>NUCLEOTIDE SEQUENCE [MRNA] OF 8-233</scope>
    <scope>PROTEIN SEQUENCE OF 1-19</scope>
    <source>
        <strain>cv. Marathon</strain>
    </source>
</reference>